<accession>T2KNA8</accession>
<dbReference type="EC" id="3.2.1.31" evidence="1"/>
<dbReference type="EMBL" id="HG315671">
    <property type="protein sequence ID" value="CDF79916.1"/>
    <property type="molecule type" value="Genomic_DNA"/>
</dbReference>
<dbReference type="RefSeq" id="WP_084817526.1">
    <property type="nucleotide sequence ID" value="NZ_HG315671.1"/>
</dbReference>
<dbReference type="SMR" id="T2KNA8"/>
<dbReference type="STRING" id="1347342.BN863_22040"/>
<dbReference type="PATRIC" id="fig|1347342.6.peg.2211"/>
<dbReference type="eggNOG" id="COG3940">
    <property type="taxonomic scope" value="Bacteria"/>
</dbReference>
<dbReference type="HOGENOM" id="CLU_003772_2_1_10"/>
<dbReference type="OrthoDB" id="9761519at2"/>
<dbReference type="Proteomes" id="UP000016160">
    <property type="component" value="Chromosome"/>
</dbReference>
<dbReference type="GO" id="GO:0042597">
    <property type="term" value="C:periplasmic space"/>
    <property type="evidence" value="ECO:0007669"/>
    <property type="project" value="UniProtKB-SubCell"/>
</dbReference>
<dbReference type="GO" id="GO:0004566">
    <property type="term" value="F:beta-glucuronidase activity"/>
    <property type="evidence" value="ECO:0007669"/>
    <property type="project" value="UniProtKB-EC"/>
</dbReference>
<dbReference type="Gene3D" id="2.60.120.260">
    <property type="entry name" value="Galactose-binding domain-like"/>
    <property type="match status" value="1"/>
</dbReference>
<dbReference type="InterPro" id="IPR054593">
    <property type="entry name" value="Beta-mannosidase-like_N2"/>
</dbReference>
<dbReference type="InterPro" id="IPR008979">
    <property type="entry name" value="Galactose-bd-like_sf"/>
</dbReference>
<dbReference type="NCBIfam" id="NF045579">
    <property type="entry name" value="rhamnoside_JR"/>
    <property type="match status" value="1"/>
</dbReference>
<dbReference type="PANTHER" id="PTHR43817">
    <property type="entry name" value="GLYCOSYL HYDROLASE"/>
    <property type="match status" value="1"/>
</dbReference>
<dbReference type="PANTHER" id="PTHR43817:SF1">
    <property type="entry name" value="HYDROLASE, FAMILY 43, PUTATIVE (AFU_ORTHOLOGUE AFUA_3G01660)-RELATED"/>
    <property type="match status" value="1"/>
</dbReference>
<dbReference type="Pfam" id="PF17132">
    <property type="entry name" value="Glyco_hydro_106"/>
    <property type="match status" value="1"/>
</dbReference>
<dbReference type="Pfam" id="PF22666">
    <property type="entry name" value="Glyco_hydro_2_N2"/>
    <property type="match status" value="1"/>
</dbReference>
<dbReference type="SUPFAM" id="SSF49785">
    <property type="entry name" value="Galactose-binding domain-like"/>
    <property type="match status" value="1"/>
</dbReference>
<feature type="signal peptide" evidence="2">
    <location>
        <begin position="1"/>
        <end position="20"/>
    </location>
</feature>
<feature type="chain" id="PRO_5004602864" description="Putative beta-glucuronidase">
    <location>
        <begin position="21"/>
        <end position="1163"/>
    </location>
</feature>
<protein>
    <recommendedName>
        <fullName evidence="6">Putative beta-glucuronidase</fullName>
        <ecNumber evidence="1">3.2.1.31</ecNumber>
    </recommendedName>
    <alternativeName>
        <fullName evidence="6">Glycosyl hydrolase 2 family protein P15</fullName>
        <shortName evidence="5">P15_GH2</shortName>
    </alternativeName>
    <alternativeName>
        <fullName evidence="5">Polysaccharide utilization locus H protein P15</fullName>
        <shortName>PUL H protein P15</shortName>
    </alternativeName>
</protein>
<keyword id="KW-0378">Hydrolase</keyword>
<keyword id="KW-0574">Periplasm</keyword>
<keyword id="KW-1185">Reference proteome</keyword>
<keyword id="KW-0732">Signal</keyword>
<reference key="1">
    <citation type="journal article" date="2013" name="Appl. Environ. Microbiol.">
        <title>The genome of the alga-associated marine flavobacterium Formosa agariphila KMM 3901T reveals a broad potential for degradation of algal polysaccharides.</title>
        <authorList>
            <person name="Mann A.J."/>
            <person name="Hahnke R.L."/>
            <person name="Huang S."/>
            <person name="Werner J."/>
            <person name="Xing P."/>
            <person name="Barbeyron T."/>
            <person name="Huettel B."/>
            <person name="Stueber K."/>
            <person name="Reinhardt R."/>
            <person name="Harder J."/>
            <person name="Gloeckner F.O."/>
            <person name="Amann R.I."/>
            <person name="Teeling H."/>
        </authorList>
    </citation>
    <scope>NUCLEOTIDE SEQUENCE [LARGE SCALE GENOMIC DNA]</scope>
    <source>
        <strain>DSM 15362 / KCTC 12365 / LMG 23005 / KMM 3901 / M-2Alg 35-1</strain>
    </source>
</reference>
<reference key="2">
    <citation type="journal article" date="2017" name="Algal Res.">
        <title>The enzymatic ulvan depolymerisation system from the alga-associated marine flavobacterium Formosa agariphila.</title>
        <authorList>
            <person name="Salinas A."/>
            <person name="French C.E."/>
        </authorList>
    </citation>
    <scope>FUNCTION</scope>
</reference>
<reference key="3">
    <citation type="journal article" date="2019" name="Nat. Chem. Biol.">
        <title>A marine bacterial enzymatic cascade degrades the algal polysaccharide ulvan.</title>
        <authorList>
            <person name="Reisky L."/>
            <person name="Prechoux A."/>
            <person name="Zuehlke M.K."/>
            <person name="Baeumgen M."/>
            <person name="Robb C.S."/>
            <person name="Gerlach N."/>
            <person name="Roret T."/>
            <person name="Stanetty C."/>
            <person name="Larocque R."/>
            <person name="Michel G."/>
            <person name="Song T."/>
            <person name="Markert S."/>
            <person name="Unfried F."/>
            <person name="Mihovilovic M.D."/>
            <person name="Trautwein-Schult A."/>
            <person name="Becher D."/>
            <person name="Schweder T."/>
            <person name="Bornscheuer U.T."/>
            <person name="Hehemann J.H."/>
        </authorList>
    </citation>
    <scope>FUNCTION</scope>
    <scope>SUBCELLULAR LOCATION</scope>
    <scope>INDUCTION</scope>
</reference>
<sequence>MPRFLKYILGLFLISISAFGQNLVPEVTELESGFNSPPNQAKARTWWHWISGNVSKSGITKDLEAMKAVGIQEAQLFNVDLGFPAGPVDYLSEDWLDLFHFSALEAKRIGLELTFHNTAGWSSSGGPWISPEYAMQTVVYSEIIVKGGKAIKKQLPQPETKLNFYKDIAVLAFPKPKQTMKIDDLDFKSLSGRIRNHLLPDTKIIPSEAVIQKQEIINLTAHLNDAGILEWKVPKGEWVILRLGHTPTGKKNHPAPKGGHGLEVDKMSTKAVDVYWEGGIQPILNKLGDLVGTTVNNCLIDSYEVGTANWTAGFDAEFETLRGYSLVSYLPTLAGYYVESGEITERFLWDFRRTIGDLMAKNYYAHFRDLCHKNGLKFSVEPYWGPFDNMQVGATGDIVMCEFWSGGYPFFDSPKFVSSIAHLNGSSIVGAESFTGIGGWDEHPAELKSIGDRAWAEGITRFIFHTYVHQPWDVAPGLALSYHGTDFNRLNTWWRQGKAFMDYIARSQFMLQQGKNVADVLVFTGESSPNTAFLLPEIKQLGYDYDLIGSNKLSDLFVKNGKICTPVGGQYDVLMLPESDWIKPETLHKIEDLVKDGAKVIGSKPKKSPSLEHYSTCDAEVKRLSDFLWGKGLVKEISIVDFLKGNNLLADFKIESDDVSDISFIHRKTDEADIYFIANARKESREIKVRFRVSNKQPEIWQAESGTIKKPAVWQNHADGTTSLPLQLGMEEAVFVVFKNASKEKSQLVSAKMELENPKSEPLSNLQIIKAEYGTFLQEGLVDITDKVAAEVKDNQLHIQASRAFCDCDPAMGYIKEFRMEYQIGEDIKTISAQEKEYVNINAGDKKLTVLKAVFGKFKPETKGVPKHYPVHDVTEKIKQEIASGNLVIPVNNQLIGGKTPEGDNTTIKITFTTDGEEQTLFVPKGRPLNLSKDRSKPEIVLNDGETQWITPYPGTLSYKNLSGKVMATTVKSVPQPIMLAGTWDVEFPSDLVTINKVRFDELKSWSAVENEGIKYFSGTASYHKTFQVSKKLLKSNNKLELDLGSVAVIAEVILNGKPVGTLWKAPFRLDVTNDVKTGENKLEVKVTNLWPNRLIGDEKLPLDFERKGPKIKSVPDWLLNNTKRPSERTTFPAWKHWDKEDELLSSGLLGPVKINVLVEKSL</sequence>
<proteinExistence type="evidence at transcript level"/>
<organism>
    <name type="scientific">Formosa agariphila (strain DSM 15362 / KCTC 12365 / LMG 23005 / KMM 3901 / M-2Alg 35-1)</name>
    <dbReference type="NCBI Taxonomy" id="1347342"/>
    <lineage>
        <taxon>Bacteria</taxon>
        <taxon>Pseudomonadati</taxon>
        <taxon>Bacteroidota</taxon>
        <taxon>Flavobacteriia</taxon>
        <taxon>Flavobacteriales</taxon>
        <taxon>Flavobacteriaceae</taxon>
        <taxon>Formosa</taxon>
    </lineage>
</organism>
<comment type="function">
    <text evidence="4 8">Glycoside hydrolase involved in ulvan degradation (Ref.2). Ulvan is the main polysaccharide component of the Ulvales (green seaweed) cell wall. It is composed of disaccharide building blocks comprising 3-sulfated rhamnose (Rha3S) linked to D-glucuronic acid (GlcA), L-iduronic acid (IduA), or D-xylose (Xyl) (Probable).</text>
</comment>
<comment type="catalytic activity">
    <reaction evidence="1">
        <text>a beta-D-glucuronoside + H2O = D-glucuronate + an alcohol</text>
        <dbReference type="Rhea" id="RHEA:17633"/>
        <dbReference type="ChEBI" id="CHEBI:15377"/>
        <dbReference type="ChEBI" id="CHEBI:30879"/>
        <dbReference type="ChEBI" id="CHEBI:58720"/>
        <dbReference type="ChEBI" id="CHEBI:83411"/>
        <dbReference type="EC" id="3.2.1.31"/>
    </reaction>
</comment>
<comment type="subcellular location">
    <subcellularLocation>
        <location evidence="7">Periplasm</location>
    </subcellularLocation>
</comment>
<comment type="induction">
    <text evidence="3">By ulvan and rhamnose.</text>
</comment>
<comment type="similarity">
    <text evidence="6">Belongs to the glycosyl hydrolase 2 family.</text>
</comment>
<evidence type="ECO:0000250" key="1">
    <source>
        <dbReference type="UniProtKB" id="P05804"/>
    </source>
</evidence>
<evidence type="ECO:0000255" key="2"/>
<evidence type="ECO:0000269" key="3">
    <source>
    </source>
</evidence>
<evidence type="ECO:0000269" key="4">
    <source ref="2"/>
</evidence>
<evidence type="ECO:0000303" key="5">
    <source>
    </source>
</evidence>
<evidence type="ECO:0000305" key="6"/>
<evidence type="ECO:0000305" key="7">
    <source>
    </source>
</evidence>
<evidence type="ECO:0000305" key="8">
    <source ref="2"/>
</evidence>
<name>PLH15_FORAG</name>
<gene>
    <name type="ORF">BN863_22040</name>
</gene>